<dbReference type="EC" id="3.4.21.92" evidence="1"/>
<dbReference type="EMBL" id="CP000009">
    <property type="protein sequence ID" value="AAW59883.1"/>
    <property type="molecule type" value="Genomic_DNA"/>
</dbReference>
<dbReference type="RefSeq" id="WP_011251687.1">
    <property type="nucleotide sequence ID" value="NZ_LT900338.1"/>
</dbReference>
<dbReference type="SMR" id="Q5FUR3"/>
<dbReference type="STRING" id="290633.GOX0087"/>
<dbReference type="MEROPS" id="S14.001"/>
<dbReference type="KEGG" id="gox:GOX0087"/>
<dbReference type="eggNOG" id="COG0740">
    <property type="taxonomic scope" value="Bacteria"/>
</dbReference>
<dbReference type="HOGENOM" id="CLU_058707_3_2_5"/>
<dbReference type="Proteomes" id="UP000006375">
    <property type="component" value="Chromosome"/>
</dbReference>
<dbReference type="GO" id="GO:0005737">
    <property type="term" value="C:cytoplasm"/>
    <property type="evidence" value="ECO:0007669"/>
    <property type="project" value="UniProtKB-SubCell"/>
</dbReference>
<dbReference type="GO" id="GO:0009368">
    <property type="term" value="C:endopeptidase Clp complex"/>
    <property type="evidence" value="ECO:0007669"/>
    <property type="project" value="TreeGrafter"/>
</dbReference>
<dbReference type="GO" id="GO:0004176">
    <property type="term" value="F:ATP-dependent peptidase activity"/>
    <property type="evidence" value="ECO:0007669"/>
    <property type="project" value="InterPro"/>
</dbReference>
<dbReference type="GO" id="GO:0051117">
    <property type="term" value="F:ATPase binding"/>
    <property type="evidence" value="ECO:0007669"/>
    <property type="project" value="TreeGrafter"/>
</dbReference>
<dbReference type="GO" id="GO:0004252">
    <property type="term" value="F:serine-type endopeptidase activity"/>
    <property type="evidence" value="ECO:0007669"/>
    <property type="project" value="UniProtKB-UniRule"/>
</dbReference>
<dbReference type="GO" id="GO:0006515">
    <property type="term" value="P:protein quality control for misfolded or incompletely synthesized proteins"/>
    <property type="evidence" value="ECO:0007669"/>
    <property type="project" value="TreeGrafter"/>
</dbReference>
<dbReference type="CDD" id="cd07017">
    <property type="entry name" value="S14_ClpP_2"/>
    <property type="match status" value="1"/>
</dbReference>
<dbReference type="FunFam" id="3.90.226.10:FF:000001">
    <property type="entry name" value="ATP-dependent Clp protease proteolytic subunit"/>
    <property type="match status" value="1"/>
</dbReference>
<dbReference type="Gene3D" id="3.90.226.10">
    <property type="entry name" value="2-enoyl-CoA Hydratase, Chain A, domain 1"/>
    <property type="match status" value="1"/>
</dbReference>
<dbReference type="HAMAP" id="MF_00444">
    <property type="entry name" value="ClpP"/>
    <property type="match status" value="1"/>
</dbReference>
<dbReference type="InterPro" id="IPR001907">
    <property type="entry name" value="ClpP"/>
</dbReference>
<dbReference type="InterPro" id="IPR029045">
    <property type="entry name" value="ClpP/crotonase-like_dom_sf"/>
</dbReference>
<dbReference type="InterPro" id="IPR023562">
    <property type="entry name" value="ClpP/TepA"/>
</dbReference>
<dbReference type="InterPro" id="IPR033135">
    <property type="entry name" value="ClpP_His_AS"/>
</dbReference>
<dbReference type="InterPro" id="IPR018215">
    <property type="entry name" value="ClpP_Ser_AS"/>
</dbReference>
<dbReference type="NCBIfam" id="NF001368">
    <property type="entry name" value="PRK00277.1"/>
    <property type="match status" value="1"/>
</dbReference>
<dbReference type="NCBIfam" id="NF009205">
    <property type="entry name" value="PRK12553.1"/>
    <property type="match status" value="1"/>
</dbReference>
<dbReference type="PANTHER" id="PTHR10381">
    <property type="entry name" value="ATP-DEPENDENT CLP PROTEASE PROTEOLYTIC SUBUNIT"/>
    <property type="match status" value="1"/>
</dbReference>
<dbReference type="PANTHER" id="PTHR10381:SF11">
    <property type="entry name" value="ATP-DEPENDENT CLP PROTEASE PROTEOLYTIC SUBUNIT, MITOCHONDRIAL"/>
    <property type="match status" value="1"/>
</dbReference>
<dbReference type="Pfam" id="PF00574">
    <property type="entry name" value="CLP_protease"/>
    <property type="match status" value="1"/>
</dbReference>
<dbReference type="PRINTS" id="PR00127">
    <property type="entry name" value="CLPPROTEASEP"/>
</dbReference>
<dbReference type="SUPFAM" id="SSF52096">
    <property type="entry name" value="ClpP/crotonase"/>
    <property type="match status" value="1"/>
</dbReference>
<dbReference type="PROSITE" id="PS00382">
    <property type="entry name" value="CLP_PROTEASE_HIS"/>
    <property type="match status" value="1"/>
</dbReference>
<dbReference type="PROSITE" id="PS00381">
    <property type="entry name" value="CLP_PROTEASE_SER"/>
    <property type="match status" value="1"/>
</dbReference>
<protein>
    <recommendedName>
        <fullName evidence="1">ATP-dependent Clp protease proteolytic subunit 1</fullName>
        <ecNumber evidence="1">3.4.21.92</ecNumber>
    </recommendedName>
    <alternativeName>
        <fullName evidence="1">Endopeptidase Clp 1</fullName>
    </alternativeName>
</protein>
<name>CLPP1_GLUOX</name>
<feature type="chain" id="PRO_0000179563" description="ATP-dependent Clp protease proteolytic subunit 1">
    <location>
        <begin position="1"/>
        <end position="215"/>
    </location>
</feature>
<feature type="active site" description="Nucleophile" evidence="1">
    <location>
        <position position="111"/>
    </location>
</feature>
<feature type="active site" evidence="1">
    <location>
        <position position="136"/>
    </location>
</feature>
<proteinExistence type="inferred from homology"/>
<comment type="function">
    <text evidence="1">Cleaves peptides in various proteins in a process that requires ATP hydrolysis. Has a chymotrypsin-like activity. Plays a major role in the degradation of misfolded proteins.</text>
</comment>
<comment type="catalytic activity">
    <reaction evidence="1">
        <text>Hydrolysis of proteins to small peptides in the presence of ATP and magnesium. alpha-casein is the usual test substrate. In the absence of ATP, only oligopeptides shorter than five residues are hydrolyzed (such as succinyl-Leu-Tyr-|-NHMec, and Leu-Tyr-Leu-|-Tyr-Trp, in which cleavage of the -Tyr-|-Leu- and -Tyr-|-Trp bonds also occurs).</text>
        <dbReference type="EC" id="3.4.21.92"/>
    </reaction>
</comment>
<comment type="subunit">
    <text evidence="1">Fourteen ClpP subunits assemble into 2 heptameric rings which stack back to back to give a disk-like structure with a central cavity, resembling the structure of eukaryotic proteasomes.</text>
</comment>
<comment type="subcellular location">
    <subcellularLocation>
        <location evidence="1">Cytoplasm</location>
    </subcellularLocation>
</comment>
<comment type="similarity">
    <text evidence="1">Belongs to the peptidase S14 family.</text>
</comment>
<reference key="1">
    <citation type="journal article" date="2005" name="Nat. Biotechnol.">
        <title>Complete genome sequence of the acetic acid bacterium Gluconobacter oxydans.</title>
        <authorList>
            <person name="Prust C."/>
            <person name="Hoffmeister M."/>
            <person name="Liesegang H."/>
            <person name="Wiezer A."/>
            <person name="Fricke W.F."/>
            <person name="Ehrenreich A."/>
            <person name="Gottschalk G."/>
            <person name="Deppenmeier U."/>
        </authorList>
    </citation>
    <scope>NUCLEOTIDE SEQUENCE [LARGE SCALE GENOMIC DNA]</scope>
    <source>
        <strain>621H</strain>
    </source>
</reference>
<accession>Q5FUR3</accession>
<gene>
    <name evidence="1" type="primary">clpP1</name>
    <name type="ordered locus">GOX0087</name>
</gene>
<evidence type="ECO:0000255" key="1">
    <source>
        <dbReference type="HAMAP-Rule" id="MF_00444"/>
    </source>
</evidence>
<keyword id="KW-0963">Cytoplasm</keyword>
<keyword id="KW-0378">Hydrolase</keyword>
<keyword id="KW-0645">Protease</keyword>
<keyword id="KW-1185">Reference proteome</keyword>
<keyword id="KW-0720">Serine protease</keyword>
<organism>
    <name type="scientific">Gluconobacter oxydans (strain 621H)</name>
    <name type="common">Gluconobacter suboxydans</name>
    <dbReference type="NCBI Taxonomy" id="290633"/>
    <lineage>
        <taxon>Bacteria</taxon>
        <taxon>Pseudomonadati</taxon>
        <taxon>Pseudomonadota</taxon>
        <taxon>Alphaproteobacteria</taxon>
        <taxon>Acetobacterales</taxon>
        <taxon>Acetobacteraceae</taxon>
        <taxon>Gluconobacter</taxon>
    </lineage>
</organism>
<sequence>MTIRDRDPLEVFSNSLVPMVVEQTARGERSFDIFSRLLQERIIFLTGPVYDQVSSLICAQLLYLESVNPTKEISFYINSPGGVVSAGLAIYDTMQYIRCPVSTVCIGQAASMGSLLLAGGEKGHRYALPNARVMVHQPSGGAQGQASDIEIQAREILIIRQRLNEIYREHTGQTLEQIEQKLERDSYLSANEAREFGLIDKVVERNPHETTPDPS</sequence>